<organism>
    <name type="scientific">Rotavirus C (isolate RVC/Cow/Japan/Shintoku/1991/G2P[3])</name>
    <name type="common">RV-C</name>
    <dbReference type="NCBI Taxonomy" id="33723"/>
    <lineage>
        <taxon>Viruses</taxon>
        <taxon>Riboviria</taxon>
        <taxon>Orthornavirae</taxon>
        <taxon>Duplornaviricota</taxon>
        <taxon>Resentoviricetes</taxon>
        <taxon>Reovirales</taxon>
        <taxon>Sedoreoviridae</taxon>
        <taxon>Rotavirus</taxon>
        <taxon>Rotavirus C</taxon>
    </lineage>
</organism>
<protein>
    <recommendedName>
        <fullName evidence="3">Outer capsid glycoprotein VP7</fullName>
    </recommendedName>
</protein>
<evidence type="ECO:0000250" key="1"/>
<evidence type="ECO:0000255" key="2"/>
<evidence type="ECO:0000255" key="3">
    <source>
        <dbReference type="HAMAP-Rule" id="MF_04130"/>
    </source>
</evidence>
<sequence>MVCTTLYTVCVILCILLMYIILFRKMIHFLIDLSLIAFVISSCIRLSNAQFFANDMLYNGNVEGVINTTNIFNVESLCIYFPNSAVGRPGPGKSDGLINDNNYAQTLAVLFETKGFPKGSVNFNTYTKISDFINSIEMTCSYNIVIIPETLANSETIEQVAEWVLNVWKCDNMNVDIYTYEQIGKDNFWAAFGEDCDVAVCPLDTTMNGIGCTPASTETYEVLSNDTQLALIDVVDNVKHRIQLNQVTCKLRNCVKGEARLNTAIVRISNLSSFDNSLSPLNNGQKTRSFKINAKKWWKIFYTIIDYINTFIQSMTPRHRAIYPEGWMLRYA</sequence>
<organismHost>
    <name type="scientific">Bos taurus</name>
    <name type="common">Bovine</name>
    <dbReference type="NCBI Taxonomy" id="9913"/>
</organismHost>
<comment type="function">
    <text evidence="3">Calcium-binding protein that interacts with rotavirus cell receptors once the initial attachment by VP4 has been achieved. Rotavirus attachment and entry into the host cell probably involves multiple sequential contacts between the outer capsid proteins VP4 and VP7, and the cell receptors. Following entry into the host cell, low intracellular or intravesicular Ca(2+) concentration probably causes the calcium-stabilized VP7 trimers to dissociate from the virion. This step is probably necessary for the membrane-disrupting entry step and the release of VP4, which is locked onto the virion by VP7.</text>
</comment>
<comment type="subunit">
    <text evidence="3">Homotrimer; disulfide-linked. 2 Ca(2+) ions bound at each subunit interface in the trimer hold the trimer together. Interacts with the intermediate capsid protein VP6. Interacts with the outer capsid protein VP5*.</text>
</comment>
<comment type="subcellular location">
    <subcellularLocation>
        <location evidence="3">Virion</location>
    </subcellularLocation>
    <subcellularLocation>
        <location evidence="3">Host endoplasmic reticulum lumen</location>
    </subcellularLocation>
    <text evidence="3">The outer layer contains 780 copies of VP7, grouped as 260 trimers. Immature double-layered particles assembled in the cytoplasm bud across the membrane of the endoplasmic reticulum, acquiring during this process a transient lipid membrane that is modified with the ER resident viral glycoproteins NSP4 and VP7; these enveloped particles also contain VP4. As the particles move towards the interior of the ER cisternae, the transient lipid membrane and the non-structural protein NSP4 are lost, while the virus surface proteins VP4 and VP7 rearrange to form the outermost virus protein layer, yielding mature infectious triple-layered particles.</text>
</comment>
<comment type="PTM">
    <text evidence="1">N-glycosylated.</text>
</comment>
<comment type="PTM">
    <text evidence="1">Intramolecular disulfide bonds.</text>
</comment>
<comment type="similarity">
    <text evidence="3">Belongs to the rotavirus VP7 family.</text>
</comment>
<accession>Q65527</accession>
<dbReference type="EMBL" id="U31750">
    <property type="protein sequence ID" value="AAC55011.1"/>
    <property type="molecule type" value="Genomic_RNA"/>
</dbReference>
<dbReference type="SMR" id="Q65527"/>
<dbReference type="GO" id="GO:0044166">
    <property type="term" value="C:host cell endoplasmic reticulum lumen"/>
    <property type="evidence" value="ECO:0007669"/>
    <property type="project" value="UniProtKB-SubCell"/>
</dbReference>
<dbReference type="GO" id="GO:0039621">
    <property type="term" value="C:T=13 icosahedral viral capsid"/>
    <property type="evidence" value="ECO:0007669"/>
    <property type="project" value="UniProtKB-UniRule"/>
</dbReference>
<dbReference type="GO" id="GO:0039624">
    <property type="term" value="C:viral outer capsid"/>
    <property type="evidence" value="ECO:0007669"/>
    <property type="project" value="UniProtKB-UniRule"/>
</dbReference>
<dbReference type="GO" id="GO:0046872">
    <property type="term" value="F:metal ion binding"/>
    <property type="evidence" value="ECO:0007669"/>
    <property type="project" value="UniProtKB-KW"/>
</dbReference>
<dbReference type="Gene3D" id="3.40.50.11130">
    <property type="entry name" value="Glycoprotein VP7, domain 1"/>
    <property type="match status" value="1"/>
</dbReference>
<dbReference type="Gene3D" id="2.60.120.800">
    <property type="entry name" value="Rotavirus outer-layer protein VP7, domain 2"/>
    <property type="match status" value="1"/>
</dbReference>
<dbReference type="HAMAP" id="MF_04130">
    <property type="entry name" value="Rota_VP7"/>
    <property type="match status" value="1"/>
</dbReference>
<dbReference type="InterPro" id="IPR001963">
    <property type="entry name" value="VP7"/>
</dbReference>
<dbReference type="InterPro" id="IPR042207">
    <property type="entry name" value="VP7_1"/>
</dbReference>
<dbReference type="InterPro" id="IPR042210">
    <property type="entry name" value="VP7_2"/>
</dbReference>
<dbReference type="Pfam" id="PF00434">
    <property type="entry name" value="VP7"/>
    <property type="match status" value="1"/>
</dbReference>
<proteinExistence type="inferred from homology"/>
<feature type="signal peptide" evidence="2">
    <location>
        <begin position="1"/>
        <end position="49"/>
    </location>
</feature>
<feature type="chain" id="PRO_0000369879" description="Outer capsid glycoprotein VP7">
    <location>
        <begin position="50"/>
        <end position="332"/>
    </location>
</feature>
<keyword id="KW-0106">Calcium</keyword>
<keyword id="KW-0167">Capsid protein</keyword>
<keyword id="KW-1015">Disulfide bond</keyword>
<keyword id="KW-0325">Glycoprotein</keyword>
<keyword id="KW-1038">Host endoplasmic reticulum</keyword>
<keyword id="KW-0945">Host-virus interaction</keyword>
<keyword id="KW-0479">Metal-binding</keyword>
<keyword id="KW-1152">Outer capsid protein</keyword>
<keyword id="KW-0732">Signal</keyword>
<keyword id="KW-1146">T=13 icosahedral capsid protein</keyword>
<keyword id="KW-0946">Virion</keyword>
<reference key="1">
    <citation type="journal article" date="1996" name="Arch. Virol.">
        <title>Sequence comparison of the VP7 gene encoding the outer capsid glycoprotein among animal and human group C rotaviruses.</title>
        <authorList>
            <person name="Tsunemitsu H."/>
            <person name="Jiang B."/>
            <person name="Saif L.J."/>
        </authorList>
    </citation>
    <scope>NUCLEOTIDE SEQUENCE [GENOMIC RNA]</scope>
</reference>
<name>VP7_ROTBS</name>